<sequence length="425" mass="46004">MGVSRVLYVEGGTPLKGELRVYPAKNAALPILAASLLTPEPITLVEVPRLRDVEVMLELLAHLGTQYAWEGRTLHLQTPEIKSTHAPYELVGQMRASFIVWGALLARAGEGHVSMPGGCAFGFRPVDQHIKALEALGAEVWEEDGTFHARRTRPLSGRVVFDLPTVGGTEQAMLAVALGGEATLVQAAVEPEVVDLGHFLALLGAEVEGLGSPIVRIKGAPRLKGGTYRIIPDRIEAGTYLLAAAATRGSLTLEGVRPDHLDALLDKLWRSGHRLEVGEDWIRFRATPDPAPFHVEAREYPGFPTDLQPIATAYLATVPGQSTVVDRIYPDRFTHVGELARMGAELYLRDRILTVQGRRLHGAQVKALDIRAGGALVVAALSAEGASEIEGVYFLERGYEHLTERLQALGARVHLRESPVALAAD</sequence>
<reference key="1">
    <citation type="journal article" date="2004" name="Nat. Biotechnol.">
        <title>The genome sequence of the extreme thermophile Thermus thermophilus.</title>
        <authorList>
            <person name="Henne A."/>
            <person name="Brueggemann H."/>
            <person name="Raasch C."/>
            <person name="Wiezer A."/>
            <person name="Hartsch T."/>
            <person name="Liesegang H."/>
            <person name="Johann A."/>
            <person name="Lienard T."/>
            <person name="Gohl O."/>
            <person name="Martinez-Arias R."/>
            <person name="Jacobi C."/>
            <person name="Starkuviene V."/>
            <person name="Schlenczeck S."/>
            <person name="Dencker S."/>
            <person name="Huber R."/>
            <person name="Klenk H.-P."/>
            <person name="Kramer W."/>
            <person name="Merkl R."/>
            <person name="Gottschalk G."/>
            <person name="Fritz H.-J."/>
        </authorList>
    </citation>
    <scope>NUCLEOTIDE SEQUENCE [LARGE SCALE GENOMIC DNA]</scope>
    <source>
        <strain>ATCC BAA-163 / DSM 7039 / HB27</strain>
    </source>
</reference>
<name>MURA_THET2</name>
<proteinExistence type="inferred from homology"/>
<keyword id="KW-0131">Cell cycle</keyword>
<keyword id="KW-0132">Cell division</keyword>
<keyword id="KW-0133">Cell shape</keyword>
<keyword id="KW-0961">Cell wall biogenesis/degradation</keyword>
<keyword id="KW-0963">Cytoplasm</keyword>
<keyword id="KW-0573">Peptidoglycan synthesis</keyword>
<keyword id="KW-0670">Pyruvate</keyword>
<keyword id="KW-0808">Transferase</keyword>
<organism>
    <name type="scientific">Thermus thermophilus (strain ATCC BAA-163 / DSM 7039 / HB27)</name>
    <dbReference type="NCBI Taxonomy" id="262724"/>
    <lineage>
        <taxon>Bacteria</taxon>
        <taxon>Thermotogati</taxon>
        <taxon>Deinococcota</taxon>
        <taxon>Deinococci</taxon>
        <taxon>Thermales</taxon>
        <taxon>Thermaceae</taxon>
        <taxon>Thermus</taxon>
    </lineage>
</organism>
<accession>Q72GJ4</accession>
<gene>
    <name evidence="1" type="primary">murA</name>
    <name type="ordered locus">TT_C1854</name>
</gene>
<dbReference type="EC" id="2.5.1.7" evidence="1"/>
<dbReference type="EMBL" id="AE017221">
    <property type="protein sequence ID" value="AAS82196.1"/>
    <property type="status" value="ALT_INIT"/>
    <property type="molecule type" value="Genomic_DNA"/>
</dbReference>
<dbReference type="RefSeq" id="WP_081424948.1">
    <property type="nucleotide sequence ID" value="NC_005835.1"/>
</dbReference>
<dbReference type="SMR" id="Q72GJ4"/>
<dbReference type="KEGG" id="tth:TT_C1854"/>
<dbReference type="eggNOG" id="COG0766">
    <property type="taxonomic scope" value="Bacteria"/>
</dbReference>
<dbReference type="HOGENOM" id="CLU_027387_0_1_0"/>
<dbReference type="OrthoDB" id="9803760at2"/>
<dbReference type="UniPathway" id="UPA00219"/>
<dbReference type="Proteomes" id="UP000000592">
    <property type="component" value="Chromosome"/>
</dbReference>
<dbReference type="GO" id="GO:0005737">
    <property type="term" value="C:cytoplasm"/>
    <property type="evidence" value="ECO:0007669"/>
    <property type="project" value="UniProtKB-SubCell"/>
</dbReference>
<dbReference type="GO" id="GO:0008760">
    <property type="term" value="F:UDP-N-acetylglucosamine 1-carboxyvinyltransferase activity"/>
    <property type="evidence" value="ECO:0007669"/>
    <property type="project" value="UniProtKB-UniRule"/>
</dbReference>
<dbReference type="GO" id="GO:0051301">
    <property type="term" value="P:cell division"/>
    <property type="evidence" value="ECO:0007669"/>
    <property type="project" value="UniProtKB-KW"/>
</dbReference>
<dbReference type="GO" id="GO:0071555">
    <property type="term" value="P:cell wall organization"/>
    <property type="evidence" value="ECO:0007669"/>
    <property type="project" value="UniProtKB-KW"/>
</dbReference>
<dbReference type="GO" id="GO:0009252">
    <property type="term" value="P:peptidoglycan biosynthetic process"/>
    <property type="evidence" value="ECO:0007669"/>
    <property type="project" value="UniProtKB-UniRule"/>
</dbReference>
<dbReference type="GO" id="GO:0008360">
    <property type="term" value="P:regulation of cell shape"/>
    <property type="evidence" value="ECO:0007669"/>
    <property type="project" value="UniProtKB-KW"/>
</dbReference>
<dbReference type="GO" id="GO:0019277">
    <property type="term" value="P:UDP-N-acetylgalactosamine biosynthetic process"/>
    <property type="evidence" value="ECO:0007669"/>
    <property type="project" value="InterPro"/>
</dbReference>
<dbReference type="CDD" id="cd01555">
    <property type="entry name" value="UdpNAET"/>
    <property type="match status" value="1"/>
</dbReference>
<dbReference type="Gene3D" id="3.65.10.10">
    <property type="entry name" value="Enolpyruvate transferase domain"/>
    <property type="match status" value="2"/>
</dbReference>
<dbReference type="HAMAP" id="MF_00111">
    <property type="entry name" value="MurA"/>
    <property type="match status" value="1"/>
</dbReference>
<dbReference type="InterPro" id="IPR001986">
    <property type="entry name" value="Enolpyruvate_Tfrase_dom"/>
</dbReference>
<dbReference type="InterPro" id="IPR036968">
    <property type="entry name" value="Enolpyruvate_Tfrase_sf"/>
</dbReference>
<dbReference type="InterPro" id="IPR050068">
    <property type="entry name" value="MurA_subfamily"/>
</dbReference>
<dbReference type="InterPro" id="IPR013792">
    <property type="entry name" value="RNA3'P_cycl/enolpyr_Trfase_a/b"/>
</dbReference>
<dbReference type="InterPro" id="IPR005750">
    <property type="entry name" value="UDP_GlcNAc_COvinyl_MurA"/>
</dbReference>
<dbReference type="NCBIfam" id="TIGR01072">
    <property type="entry name" value="murA"/>
    <property type="match status" value="1"/>
</dbReference>
<dbReference type="NCBIfam" id="NF006873">
    <property type="entry name" value="PRK09369.1"/>
    <property type="match status" value="1"/>
</dbReference>
<dbReference type="PANTHER" id="PTHR43783">
    <property type="entry name" value="UDP-N-ACETYLGLUCOSAMINE 1-CARBOXYVINYLTRANSFERASE"/>
    <property type="match status" value="1"/>
</dbReference>
<dbReference type="PANTHER" id="PTHR43783:SF1">
    <property type="entry name" value="UDP-N-ACETYLGLUCOSAMINE 1-CARBOXYVINYLTRANSFERASE"/>
    <property type="match status" value="1"/>
</dbReference>
<dbReference type="Pfam" id="PF00275">
    <property type="entry name" value="EPSP_synthase"/>
    <property type="match status" value="1"/>
</dbReference>
<dbReference type="SUPFAM" id="SSF55205">
    <property type="entry name" value="EPT/RTPC-like"/>
    <property type="match status" value="1"/>
</dbReference>
<feature type="chain" id="PRO_0000231291" description="UDP-N-acetylglucosamine 1-carboxyvinyltransferase">
    <location>
        <begin position="1"/>
        <end position="425"/>
    </location>
</feature>
<feature type="active site" description="Proton donor" evidence="1">
    <location>
        <position position="119"/>
    </location>
</feature>
<feature type="binding site" evidence="1">
    <location>
        <begin position="25"/>
        <end position="26"/>
    </location>
    <ligand>
        <name>phosphoenolpyruvate</name>
        <dbReference type="ChEBI" id="CHEBI:58702"/>
    </ligand>
</feature>
<feature type="binding site" evidence="1">
    <location>
        <position position="95"/>
    </location>
    <ligand>
        <name>UDP-N-acetyl-alpha-D-glucosamine</name>
        <dbReference type="ChEBI" id="CHEBI:57705"/>
    </ligand>
</feature>
<feature type="binding site" evidence="1">
    <location>
        <begin position="124"/>
        <end position="128"/>
    </location>
    <ligand>
        <name>UDP-N-acetyl-alpha-D-glucosamine</name>
        <dbReference type="ChEBI" id="CHEBI:57705"/>
    </ligand>
</feature>
<feature type="binding site" evidence="1">
    <location>
        <position position="306"/>
    </location>
    <ligand>
        <name>UDP-N-acetyl-alpha-D-glucosamine</name>
        <dbReference type="ChEBI" id="CHEBI:57705"/>
    </ligand>
</feature>
<feature type="binding site" evidence="1">
    <location>
        <position position="328"/>
    </location>
    <ligand>
        <name>UDP-N-acetyl-alpha-D-glucosamine</name>
        <dbReference type="ChEBI" id="CHEBI:57705"/>
    </ligand>
</feature>
<feature type="modified residue" description="2-(S-cysteinyl)pyruvic acid O-phosphothioketal" evidence="1">
    <location>
        <position position="119"/>
    </location>
</feature>
<protein>
    <recommendedName>
        <fullName evidence="1">UDP-N-acetylglucosamine 1-carboxyvinyltransferase</fullName>
        <ecNumber evidence="1">2.5.1.7</ecNumber>
    </recommendedName>
    <alternativeName>
        <fullName evidence="1">Enoylpyruvate transferase</fullName>
    </alternativeName>
    <alternativeName>
        <fullName evidence="1">UDP-N-acetylglucosamine enolpyruvyl transferase</fullName>
        <shortName evidence="1">EPT</shortName>
    </alternativeName>
</protein>
<evidence type="ECO:0000255" key="1">
    <source>
        <dbReference type="HAMAP-Rule" id="MF_00111"/>
    </source>
</evidence>
<evidence type="ECO:0000305" key="2"/>
<comment type="function">
    <text evidence="1">Cell wall formation. Adds enolpyruvyl to UDP-N-acetylglucosamine.</text>
</comment>
<comment type="catalytic activity">
    <reaction evidence="1">
        <text>phosphoenolpyruvate + UDP-N-acetyl-alpha-D-glucosamine = UDP-N-acetyl-3-O-(1-carboxyvinyl)-alpha-D-glucosamine + phosphate</text>
        <dbReference type="Rhea" id="RHEA:18681"/>
        <dbReference type="ChEBI" id="CHEBI:43474"/>
        <dbReference type="ChEBI" id="CHEBI:57705"/>
        <dbReference type="ChEBI" id="CHEBI:58702"/>
        <dbReference type="ChEBI" id="CHEBI:68483"/>
        <dbReference type="EC" id="2.5.1.7"/>
    </reaction>
</comment>
<comment type="pathway">
    <text evidence="1">Cell wall biogenesis; peptidoglycan biosynthesis.</text>
</comment>
<comment type="subcellular location">
    <subcellularLocation>
        <location evidence="1">Cytoplasm</location>
    </subcellularLocation>
</comment>
<comment type="similarity">
    <text evidence="1">Belongs to the EPSP synthase family. MurA subfamily.</text>
</comment>
<comment type="sequence caution" evidence="2">
    <conflict type="erroneous initiation">
        <sequence resource="EMBL-CDS" id="AAS82196"/>
    </conflict>
</comment>